<name>HIS6_AERHH</name>
<organism>
    <name type="scientific">Aeromonas hydrophila subsp. hydrophila (strain ATCC 7966 / DSM 30187 / BCRC 13018 / CCUG 14551 / JCM 1027 / KCTC 2358 / NCIMB 9240 / NCTC 8049)</name>
    <dbReference type="NCBI Taxonomy" id="380703"/>
    <lineage>
        <taxon>Bacteria</taxon>
        <taxon>Pseudomonadati</taxon>
        <taxon>Pseudomonadota</taxon>
        <taxon>Gammaproteobacteria</taxon>
        <taxon>Aeromonadales</taxon>
        <taxon>Aeromonadaceae</taxon>
        <taxon>Aeromonas</taxon>
    </lineage>
</organism>
<dbReference type="EC" id="4.3.2.10" evidence="1"/>
<dbReference type="EMBL" id="CP000462">
    <property type="protein sequence ID" value="ABK37661.1"/>
    <property type="molecule type" value="Genomic_DNA"/>
</dbReference>
<dbReference type="RefSeq" id="WP_011706044.1">
    <property type="nucleotide sequence ID" value="NC_008570.1"/>
</dbReference>
<dbReference type="RefSeq" id="YP_856711.1">
    <property type="nucleotide sequence ID" value="NC_008570.1"/>
</dbReference>
<dbReference type="SMR" id="A0KKB0"/>
<dbReference type="STRING" id="380703.AHA_2187"/>
<dbReference type="EnsemblBacteria" id="ABK37661">
    <property type="protein sequence ID" value="ABK37661"/>
    <property type="gene ID" value="AHA_2187"/>
</dbReference>
<dbReference type="GeneID" id="47845427"/>
<dbReference type="KEGG" id="aha:AHA_2187"/>
<dbReference type="PATRIC" id="fig|380703.7.peg.2190"/>
<dbReference type="eggNOG" id="COG0107">
    <property type="taxonomic scope" value="Bacteria"/>
</dbReference>
<dbReference type="HOGENOM" id="CLU_048577_4_0_6"/>
<dbReference type="OrthoDB" id="9781903at2"/>
<dbReference type="UniPathway" id="UPA00031">
    <property type="reaction ID" value="UER00010"/>
</dbReference>
<dbReference type="Proteomes" id="UP000000756">
    <property type="component" value="Chromosome"/>
</dbReference>
<dbReference type="GO" id="GO:0005737">
    <property type="term" value="C:cytoplasm"/>
    <property type="evidence" value="ECO:0007669"/>
    <property type="project" value="UniProtKB-SubCell"/>
</dbReference>
<dbReference type="GO" id="GO:0000107">
    <property type="term" value="F:imidazoleglycerol-phosphate synthase activity"/>
    <property type="evidence" value="ECO:0007669"/>
    <property type="project" value="UniProtKB-UniRule"/>
</dbReference>
<dbReference type="GO" id="GO:0016829">
    <property type="term" value="F:lyase activity"/>
    <property type="evidence" value="ECO:0007669"/>
    <property type="project" value="UniProtKB-KW"/>
</dbReference>
<dbReference type="GO" id="GO:0000105">
    <property type="term" value="P:L-histidine biosynthetic process"/>
    <property type="evidence" value="ECO:0007669"/>
    <property type="project" value="UniProtKB-UniRule"/>
</dbReference>
<dbReference type="CDD" id="cd04731">
    <property type="entry name" value="HisF"/>
    <property type="match status" value="1"/>
</dbReference>
<dbReference type="FunFam" id="3.20.20.70:FF:000006">
    <property type="entry name" value="Imidazole glycerol phosphate synthase subunit HisF"/>
    <property type="match status" value="1"/>
</dbReference>
<dbReference type="Gene3D" id="3.20.20.70">
    <property type="entry name" value="Aldolase class I"/>
    <property type="match status" value="1"/>
</dbReference>
<dbReference type="HAMAP" id="MF_01013">
    <property type="entry name" value="HisF"/>
    <property type="match status" value="1"/>
</dbReference>
<dbReference type="InterPro" id="IPR013785">
    <property type="entry name" value="Aldolase_TIM"/>
</dbReference>
<dbReference type="InterPro" id="IPR006062">
    <property type="entry name" value="His_biosynth"/>
</dbReference>
<dbReference type="InterPro" id="IPR004651">
    <property type="entry name" value="HisF"/>
</dbReference>
<dbReference type="InterPro" id="IPR050064">
    <property type="entry name" value="IGPS_HisA/HisF"/>
</dbReference>
<dbReference type="InterPro" id="IPR011060">
    <property type="entry name" value="RibuloseP-bd_barrel"/>
</dbReference>
<dbReference type="NCBIfam" id="TIGR00735">
    <property type="entry name" value="hisF"/>
    <property type="match status" value="1"/>
</dbReference>
<dbReference type="PANTHER" id="PTHR21235:SF2">
    <property type="entry name" value="IMIDAZOLE GLYCEROL PHOSPHATE SYNTHASE HISHF"/>
    <property type="match status" value="1"/>
</dbReference>
<dbReference type="PANTHER" id="PTHR21235">
    <property type="entry name" value="IMIDAZOLE GLYCEROL PHOSPHATE SYNTHASE SUBUNIT HISF/H IGP SYNTHASE SUBUNIT HISF/H"/>
    <property type="match status" value="1"/>
</dbReference>
<dbReference type="Pfam" id="PF00977">
    <property type="entry name" value="His_biosynth"/>
    <property type="match status" value="1"/>
</dbReference>
<dbReference type="SUPFAM" id="SSF51366">
    <property type="entry name" value="Ribulose-phoshate binding barrel"/>
    <property type="match status" value="1"/>
</dbReference>
<gene>
    <name evidence="1" type="primary">hisF</name>
    <name type="ordered locus">AHA_2187</name>
</gene>
<sequence>MLSKRIIPCLDVKDGVVVKGVQFRNHEVMGGIVELARRYASEGADELVFYDITASSDERVVDKSWVSRVAEVIDIPFCVAGGIKSVEDARQILEFGADKVSINSPALADPTLITRLAERFGVQCVVVGIDSYFDAQSGHYQVKQFTGDESRTRTTAWHTLDWVEEAQKRGAGEIVLNVMNQDGMRQGYDLEQLKLVRAVCKVPLIASGGAGAMEHFRDAFTLADVDGALAASVFHKGLIPIPELKRWLKTEGVAIRE</sequence>
<keyword id="KW-0028">Amino-acid biosynthesis</keyword>
<keyword id="KW-0963">Cytoplasm</keyword>
<keyword id="KW-0368">Histidine biosynthesis</keyword>
<keyword id="KW-0456">Lyase</keyword>
<keyword id="KW-1185">Reference proteome</keyword>
<evidence type="ECO:0000255" key="1">
    <source>
        <dbReference type="HAMAP-Rule" id="MF_01013"/>
    </source>
</evidence>
<accession>A0KKB0</accession>
<proteinExistence type="inferred from homology"/>
<comment type="function">
    <text evidence="1">IGPS catalyzes the conversion of PRFAR and glutamine to IGP, AICAR and glutamate. The HisF subunit catalyzes the cyclization activity that produces IGP and AICAR from PRFAR using the ammonia provided by the HisH subunit.</text>
</comment>
<comment type="catalytic activity">
    <reaction evidence="1">
        <text>5-[(5-phospho-1-deoxy-D-ribulos-1-ylimino)methylamino]-1-(5-phospho-beta-D-ribosyl)imidazole-4-carboxamide + L-glutamine = D-erythro-1-(imidazol-4-yl)glycerol 3-phosphate + 5-amino-1-(5-phospho-beta-D-ribosyl)imidazole-4-carboxamide + L-glutamate + H(+)</text>
        <dbReference type="Rhea" id="RHEA:24793"/>
        <dbReference type="ChEBI" id="CHEBI:15378"/>
        <dbReference type="ChEBI" id="CHEBI:29985"/>
        <dbReference type="ChEBI" id="CHEBI:58278"/>
        <dbReference type="ChEBI" id="CHEBI:58359"/>
        <dbReference type="ChEBI" id="CHEBI:58475"/>
        <dbReference type="ChEBI" id="CHEBI:58525"/>
        <dbReference type="EC" id="4.3.2.10"/>
    </reaction>
</comment>
<comment type="pathway">
    <text evidence="1">Amino-acid biosynthesis; L-histidine biosynthesis; L-histidine from 5-phospho-alpha-D-ribose 1-diphosphate: step 5/9.</text>
</comment>
<comment type="subunit">
    <text evidence="1">Heterodimer of HisH and HisF.</text>
</comment>
<comment type="subcellular location">
    <subcellularLocation>
        <location evidence="1">Cytoplasm</location>
    </subcellularLocation>
</comment>
<comment type="similarity">
    <text evidence="1">Belongs to the HisA/HisF family.</text>
</comment>
<reference key="1">
    <citation type="journal article" date="2006" name="J. Bacteriol.">
        <title>Genome sequence of Aeromonas hydrophila ATCC 7966T: jack of all trades.</title>
        <authorList>
            <person name="Seshadri R."/>
            <person name="Joseph S.W."/>
            <person name="Chopra A.K."/>
            <person name="Sha J."/>
            <person name="Shaw J."/>
            <person name="Graf J."/>
            <person name="Haft D.H."/>
            <person name="Wu M."/>
            <person name="Ren Q."/>
            <person name="Rosovitz M.J."/>
            <person name="Madupu R."/>
            <person name="Tallon L."/>
            <person name="Kim M."/>
            <person name="Jin S."/>
            <person name="Vuong H."/>
            <person name="Stine O.C."/>
            <person name="Ali A."/>
            <person name="Horneman A.J."/>
            <person name="Heidelberg J.F."/>
        </authorList>
    </citation>
    <scope>NUCLEOTIDE SEQUENCE [LARGE SCALE GENOMIC DNA]</scope>
    <source>
        <strain>ATCC 7966 / DSM 30187 / BCRC 13018 / CCUG 14551 / JCM 1027 / KCTC 2358 / NCIMB 9240 / NCTC 8049</strain>
    </source>
</reference>
<protein>
    <recommendedName>
        <fullName evidence="1">Imidazole glycerol phosphate synthase subunit HisF</fullName>
        <ecNumber evidence="1">4.3.2.10</ecNumber>
    </recommendedName>
    <alternativeName>
        <fullName evidence="1">IGP synthase cyclase subunit</fullName>
    </alternativeName>
    <alternativeName>
        <fullName evidence="1">IGP synthase subunit HisF</fullName>
    </alternativeName>
    <alternativeName>
        <fullName evidence="1">ImGP synthase subunit HisF</fullName>
        <shortName evidence="1">IGPS subunit HisF</shortName>
    </alternativeName>
</protein>
<feature type="chain" id="PRO_1000063016" description="Imidazole glycerol phosphate synthase subunit HisF">
    <location>
        <begin position="1"/>
        <end position="257"/>
    </location>
</feature>
<feature type="active site" evidence="1">
    <location>
        <position position="11"/>
    </location>
</feature>
<feature type="active site" evidence="1">
    <location>
        <position position="130"/>
    </location>
</feature>